<dbReference type="EMBL" id="AE008917">
    <property type="protein sequence ID" value="AAL51508.1"/>
    <property type="molecule type" value="Genomic_DNA"/>
</dbReference>
<dbReference type="PIR" id="AI3292">
    <property type="entry name" value="AI3292"/>
</dbReference>
<dbReference type="RefSeq" id="WP_002964799.1">
    <property type="nucleotide sequence ID" value="NZ_GG703781.1"/>
</dbReference>
<dbReference type="SMR" id="Q8YIW2"/>
<dbReference type="GeneID" id="93017928"/>
<dbReference type="KEGG" id="bme:BMEI0327"/>
<dbReference type="KEGG" id="bmel:DK63_1107"/>
<dbReference type="PATRIC" id="fig|224914.52.peg.1166"/>
<dbReference type="eggNOG" id="COG0231">
    <property type="taxonomic scope" value="Bacteria"/>
</dbReference>
<dbReference type="PhylomeDB" id="Q8YIW2"/>
<dbReference type="UniPathway" id="UPA00345"/>
<dbReference type="Proteomes" id="UP000000419">
    <property type="component" value="Chromosome I"/>
</dbReference>
<dbReference type="GO" id="GO:0005737">
    <property type="term" value="C:cytoplasm"/>
    <property type="evidence" value="ECO:0007669"/>
    <property type="project" value="UniProtKB-SubCell"/>
</dbReference>
<dbReference type="GO" id="GO:0003746">
    <property type="term" value="F:translation elongation factor activity"/>
    <property type="evidence" value="ECO:0007669"/>
    <property type="project" value="UniProtKB-UniRule"/>
</dbReference>
<dbReference type="GO" id="GO:0043043">
    <property type="term" value="P:peptide biosynthetic process"/>
    <property type="evidence" value="ECO:0007669"/>
    <property type="project" value="InterPro"/>
</dbReference>
<dbReference type="CDD" id="cd04470">
    <property type="entry name" value="S1_EF-P_repeat_1"/>
    <property type="match status" value="1"/>
</dbReference>
<dbReference type="CDD" id="cd05794">
    <property type="entry name" value="S1_EF-P_repeat_2"/>
    <property type="match status" value="1"/>
</dbReference>
<dbReference type="FunFam" id="2.30.30.30:FF:000003">
    <property type="entry name" value="Elongation factor P"/>
    <property type="match status" value="1"/>
</dbReference>
<dbReference type="FunFam" id="2.40.50.140:FF:000004">
    <property type="entry name" value="Elongation factor P"/>
    <property type="match status" value="1"/>
</dbReference>
<dbReference type="FunFam" id="2.40.50.140:FF:000009">
    <property type="entry name" value="Elongation factor P"/>
    <property type="match status" value="1"/>
</dbReference>
<dbReference type="Gene3D" id="2.30.30.30">
    <property type="match status" value="1"/>
</dbReference>
<dbReference type="Gene3D" id="2.40.50.140">
    <property type="entry name" value="Nucleic acid-binding proteins"/>
    <property type="match status" value="2"/>
</dbReference>
<dbReference type="HAMAP" id="MF_00141">
    <property type="entry name" value="EF_P"/>
    <property type="match status" value="1"/>
</dbReference>
<dbReference type="InterPro" id="IPR015365">
    <property type="entry name" value="Elong-fact-P_C"/>
</dbReference>
<dbReference type="InterPro" id="IPR012340">
    <property type="entry name" value="NA-bd_OB-fold"/>
</dbReference>
<dbReference type="InterPro" id="IPR014722">
    <property type="entry name" value="Rib_uL2_dom2"/>
</dbReference>
<dbReference type="InterPro" id="IPR020599">
    <property type="entry name" value="Transl_elong_fac_P/YeiP"/>
</dbReference>
<dbReference type="InterPro" id="IPR013185">
    <property type="entry name" value="Transl_elong_KOW-like"/>
</dbReference>
<dbReference type="InterPro" id="IPR001059">
    <property type="entry name" value="Transl_elong_P/YeiP_cen"/>
</dbReference>
<dbReference type="InterPro" id="IPR013852">
    <property type="entry name" value="Transl_elong_P/YeiP_CS"/>
</dbReference>
<dbReference type="InterPro" id="IPR011768">
    <property type="entry name" value="Transl_elongation_fac_P"/>
</dbReference>
<dbReference type="InterPro" id="IPR008991">
    <property type="entry name" value="Translation_prot_SH3-like_sf"/>
</dbReference>
<dbReference type="NCBIfam" id="TIGR00038">
    <property type="entry name" value="efp"/>
    <property type="match status" value="1"/>
</dbReference>
<dbReference type="NCBIfam" id="NF001810">
    <property type="entry name" value="PRK00529.1"/>
    <property type="match status" value="1"/>
</dbReference>
<dbReference type="PANTHER" id="PTHR30053">
    <property type="entry name" value="ELONGATION FACTOR P"/>
    <property type="match status" value="1"/>
</dbReference>
<dbReference type="PANTHER" id="PTHR30053:SF14">
    <property type="entry name" value="TRANSLATION ELONGATION FACTOR KOW-LIKE DOMAIN-CONTAINING PROTEIN"/>
    <property type="match status" value="1"/>
</dbReference>
<dbReference type="Pfam" id="PF01132">
    <property type="entry name" value="EFP"/>
    <property type="match status" value="1"/>
</dbReference>
<dbReference type="Pfam" id="PF08207">
    <property type="entry name" value="EFP_N"/>
    <property type="match status" value="1"/>
</dbReference>
<dbReference type="Pfam" id="PF09285">
    <property type="entry name" value="Elong-fact-P_C"/>
    <property type="match status" value="1"/>
</dbReference>
<dbReference type="PIRSF" id="PIRSF005901">
    <property type="entry name" value="EF-P"/>
    <property type="match status" value="1"/>
</dbReference>
<dbReference type="SMART" id="SM01185">
    <property type="entry name" value="EFP"/>
    <property type="match status" value="1"/>
</dbReference>
<dbReference type="SMART" id="SM00841">
    <property type="entry name" value="Elong-fact-P_C"/>
    <property type="match status" value="1"/>
</dbReference>
<dbReference type="SUPFAM" id="SSF50249">
    <property type="entry name" value="Nucleic acid-binding proteins"/>
    <property type="match status" value="2"/>
</dbReference>
<dbReference type="SUPFAM" id="SSF50104">
    <property type="entry name" value="Translation proteins SH3-like domain"/>
    <property type="match status" value="1"/>
</dbReference>
<dbReference type="PROSITE" id="PS01275">
    <property type="entry name" value="EFP"/>
    <property type="match status" value="1"/>
</dbReference>
<reference key="1">
    <citation type="journal article" date="2002" name="Proc. Natl. Acad. Sci. U.S.A.">
        <title>The genome sequence of the facultative intracellular pathogen Brucella melitensis.</title>
        <authorList>
            <person name="DelVecchio V.G."/>
            <person name="Kapatral V."/>
            <person name="Redkar R.J."/>
            <person name="Patra G."/>
            <person name="Mujer C."/>
            <person name="Los T."/>
            <person name="Ivanova N."/>
            <person name="Anderson I."/>
            <person name="Bhattacharyya A."/>
            <person name="Lykidis A."/>
            <person name="Reznik G."/>
            <person name="Jablonski L."/>
            <person name="Larsen N."/>
            <person name="D'Souza M."/>
            <person name="Bernal A."/>
            <person name="Mazur M."/>
            <person name="Goltsman E."/>
            <person name="Selkov E."/>
            <person name="Elzer P.H."/>
            <person name="Hagius S."/>
            <person name="O'Callaghan D."/>
            <person name="Letesson J.-J."/>
            <person name="Haselkorn R."/>
            <person name="Kyrpides N.C."/>
            <person name="Overbeek R."/>
        </authorList>
    </citation>
    <scope>NUCLEOTIDE SEQUENCE [LARGE SCALE GENOMIC DNA]</scope>
    <source>
        <strain>ATCC 23456 / CCUG 17765 / NCTC 10094 / 16M</strain>
    </source>
</reference>
<organism>
    <name type="scientific">Brucella melitensis biotype 1 (strain ATCC 23456 / CCUG 17765 / NCTC 10094 / 16M)</name>
    <dbReference type="NCBI Taxonomy" id="224914"/>
    <lineage>
        <taxon>Bacteria</taxon>
        <taxon>Pseudomonadati</taxon>
        <taxon>Pseudomonadota</taxon>
        <taxon>Alphaproteobacteria</taxon>
        <taxon>Hyphomicrobiales</taxon>
        <taxon>Brucellaceae</taxon>
        <taxon>Brucella/Ochrobactrum group</taxon>
        <taxon>Brucella</taxon>
    </lineage>
</organism>
<comment type="function">
    <text evidence="1">Involved in peptide bond synthesis. Stimulates efficient translation and peptide-bond synthesis on native or reconstituted 70S ribosomes in vitro. Probably functions indirectly by altering the affinity of the ribosome for aminoacyl-tRNA, thus increasing their reactivity as acceptors for peptidyl transferase.</text>
</comment>
<comment type="pathway">
    <text evidence="1">Protein biosynthesis; polypeptide chain elongation.</text>
</comment>
<comment type="subcellular location">
    <subcellularLocation>
        <location evidence="1">Cytoplasm</location>
    </subcellularLocation>
</comment>
<comment type="similarity">
    <text evidence="1">Belongs to the elongation factor P family.</text>
</comment>
<proteinExistence type="inferred from homology"/>
<accession>Q8YIW2</accession>
<sequence length="186" mass="20700">MKINGNEIRPGNVIEHEGGLWVAVKTNAVKPGKGGAYNQVELKNLINGTKLNERFRAAESVERVRLEQKDFSFLYEQGEALIFMDTETYEQLELQKDFVGDRAAFLQDGMMVTVELYEEKPIGIRLPDQVTLAITEADPVVKGQTAASSYKPAVLENGIRIPVPPFIASGERVIVDTNELTYISRA</sequence>
<gene>
    <name evidence="1" type="primary">efp</name>
    <name type="ordered locus">BMEI0327</name>
</gene>
<feature type="chain" id="PRO_0000094213" description="Elongation factor P">
    <location>
        <begin position="1"/>
        <end position="186"/>
    </location>
</feature>
<keyword id="KW-0963">Cytoplasm</keyword>
<keyword id="KW-0251">Elongation factor</keyword>
<keyword id="KW-0648">Protein biosynthesis</keyword>
<protein>
    <recommendedName>
        <fullName evidence="1">Elongation factor P</fullName>
        <shortName evidence="1">EF-P</shortName>
    </recommendedName>
</protein>
<name>EFP_BRUME</name>
<evidence type="ECO:0000255" key="1">
    <source>
        <dbReference type="HAMAP-Rule" id="MF_00141"/>
    </source>
</evidence>